<feature type="chain" id="PRO_0000380126" description="Protein Smaug homolog 1">
    <location>
        <begin position="1"/>
        <end position="710"/>
    </location>
</feature>
<feature type="domain" description="SAM">
    <location>
        <begin position="319"/>
        <end position="379"/>
    </location>
</feature>
<feature type="region of interest" description="Disordered" evidence="2">
    <location>
        <begin position="276"/>
        <end position="319"/>
    </location>
</feature>
<feature type="region of interest" description="Disordered" evidence="2">
    <location>
        <begin position="441"/>
        <end position="476"/>
    </location>
</feature>
<feature type="compositionally biased region" description="Polar residues" evidence="2">
    <location>
        <begin position="309"/>
        <end position="318"/>
    </location>
</feature>
<comment type="function">
    <text evidence="1">Acts as a translational repressor.</text>
</comment>
<comment type="subcellular location">
    <subcellularLocation>
        <location evidence="1">Cytoplasm</location>
    </subcellularLocation>
    <subcellularLocation>
        <location evidence="1">Cell projection</location>
        <location evidence="1">Dendrite</location>
    </subcellularLocation>
    <subcellularLocation>
        <location evidence="1">Synapse</location>
        <location evidence="1">Synaptosome</location>
    </subcellularLocation>
</comment>
<comment type="similarity">
    <text evidence="3">Belongs to the SMAUG family.</text>
</comment>
<reference key="1">
    <citation type="submission" date="2005-01" db="EMBL/GenBank/DDBJ databases">
        <authorList>
            <consortium name="NIH - Xenopus Gene Collection (XGC) project"/>
        </authorList>
    </citation>
    <scope>NUCLEOTIDE SEQUENCE [LARGE SCALE MRNA]</scope>
    <source>
        <tissue>Egg</tissue>
    </source>
</reference>
<evidence type="ECO:0000250" key="1"/>
<evidence type="ECO:0000256" key="2">
    <source>
        <dbReference type="SAM" id="MobiDB-lite"/>
    </source>
</evidence>
<evidence type="ECO:0000305" key="3"/>
<sequence>MMFRDQVGMLSGWFKGWNECEQTVALLSLLKRVSRTQARFLQICLEHSLVDCTELHILEGEANNPAIINQWQQESKDKVISQLLTHLPLLKPGNIDAKMAYMKLLPKILAHSIEHNQHIEESRQLLSYALIHPATSLDDRSALAMWLNHLEDRTSGNFSTQSRCRSDSLDYGQMQYYHQRQNSDDKQNGWPNSRDSGICISSSGWQEKNTGCENGHLPLYSSSSVPSTINAIGTSTILSGQTHHSSLKRSVSLTPPMNVPNQPLGHGWMSHEDLRARGSQGIPSDHAPLSPQSSVASSGSGGSEHLEEQSTACNTFQDEGSGMKDVPAWLKSLRLHKYAALFSHITYDEMMSLNECHLEAQNVTKGARHKIVISIQKLKERHNLLKTLERDVLEGGNLRVPLQELHQIILTPIKACFPQNSNTEEHDQEADSQPPLLASKNQATESKDSASGGIQQHHIGNCESESGGVPLPESDLPGQFTRVMGKVCTQLLVSRPDEENISSYLQLIDKCLTHDAFTETQKKRLLSWKQQVQKLFRSFPRKSLLDVAGYRQQRKTSVDVLIGSRGFGQSNSLPTAGSVGSGIARRNPRQFQIPSRNLPSTRLSLLGASSLLGATQRASASNPAMLKQGRQNLWFANPGGSNSMPSRSHSSVQRTRSLPVHTSPQTMLMFQQQDFQVPVTEPDINNRLESLCLSMTEHALGDGVDRTSTI</sequence>
<protein>
    <recommendedName>
        <fullName>Protein Smaug homolog 1</fullName>
        <shortName>Smaug 1</shortName>
    </recommendedName>
    <alternativeName>
        <fullName>Sterile alpha motif domain-containing protein 4A</fullName>
    </alternativeName>
</protein>
<dbReference type="EMBL" id="BC089262">
    <property type="protein sequence ID" value="AAH89262.1"/>
    <property type="molecule type" value="mRNA"/>
</dbReference>
<dbReference type="RefSeq" id="NP_001089983.1">
    <property type="nucleotide sequence ID" value="NM_001096514.1"/>
</dbReference>
<dbReference type="SMR" id="Q5FWP2"/>
<dbReference type="BioGRID" id="592835">
    <property type="interactions" value="1"/>
</dbReference>
<dbReference type="IntAct" id="Q5FWP2">
    <property type="interactions" value="1"/>
</dbReference>
<dbReference type="DNASU" id="735054"/>
<dbReference type="GeneID" id="735054"/>
<dbReference type="KEGG" id="xla:735054"/>
<dbReference type="AGR" id="Xenbase:XB-GENE-6254504"/>
<dbReference type="CTD" id="735054"/>
<dbReference type="Xenbase" id="XB-GENE-6254504">
    <property type="gene designation" value="samd4a.S"/>
</dbReference>
<dbReference type="OrthoDB" id="2155283at2759"/>
<dbReference type="Proteomes" id="UP000186698">
    <property type="component" value="Chromosome 8S"/>
</dbReference>
<dbReference type="Bgee" id="735054">
    <property type="expression patterns" value="Expressed in blastula and 19 other cell types or tissues"/>
</dbReference>
<dbReference type="GO" id="GO:0030425">
    <property type="term" value="C:dendrite"/>
    <property type="evidence" value="ECO:0007669"/>
    <property type="project" value="UniProtKB-SubCell"/>
</dbReference>
<dbReference type="GO" id="GO:0000932">
    <property type="term" value="C:P-body"/>
    <property type="evidence" value="ECO:0000318"/>
    <property type="project" value="GO_Central"/>
</dbReference>
<dbReference type="GO" id="GO:0045202">
    <property type="term" value="C:synapse"/>
    <property type="evidence" value="ECO:0007669"/>
    <property type="project" value="UniProtKB-SubCell"/>
</dbReference>
<dbReference type="GO" id="GO:0003729">
    <property type="term" value="F:mRNA binding"/>
    <property type="evidence" value="ECO:0000318"/>
    <property type="project" value="GO_Central"/>
</dbReference>
<dbReference type="GO" id="GO:0030371">
    <property type="term" value="F:translation repressor activity"/>
    <property type="evidence" value="ECO:0007669"/>
    <property type="project" value="InterPro"/>
</dbReference>
<dbReference type="GO" id="GO:0000289">
    <property type="term" value="P:nuclear-transcribed mRNA poly(A) tail shortening"/>
    <property type="evidence" value="ECO:0000318"/>
    <property type="project" value="GO_Central"/>
</dbReference>
<dbReference type="CDD" id="cd09557">
    <property type="entry name" value="SAM_Smaug"/>
    <property type="match status" value="1"/>
</dbReference>
<dbReference type="FunFam" id="1.10.150.50:FF:000013">
    <property type="entry name" value="Protein Smaug homolog 1 isoform 2"/>
    <property type="match status" value="1"/>
</dbReference>
<dbReference type="Gene3D" id="1.25.40.170">
    <property type="entry name" value="Smaug, PHAT domain"/>
    <property type="match status" value="2"/>
</dbReference>
<dbReference type="Gene3D" id="1.10.150.50">
    <property type="entry name" value="Transcription Factor, Ets-1"/>
    <property type="match status" value="1"/>
</dbReference>
<dbReference type="InterPro" id="IPR037093">
    <property type="entry name" value="PHAT_dom_sf"/>
</dbReference>
<dbReference type="InterPro" id="IPR001660">
    <property type="entry name" value="SAM"/>
</dbReference>
<dbReference type="InterPro" id="IPR013761">
    <property type="entry name" value="SAM/pointed_sf"/>
</dbReference>
<dbReference type="InterPro" id="IPR050897">
    <property type="entry name" value="SMAUG/VTS1_RNA-bind"/>
</dbReference>
<dbReference type="InterPro" id="IPR037634">
    <property type="entry name" value="Smaug_SAM"/>
</dbReference>
<dbReference type="PANTHER" id="PTHR12515:SF8">
    <property type="entry name" value="PROTEIN SMAUG HOMOLOG 1"/>
    <property type="match status" value="1"/>
</dbReference>
<dbReference type="PANTHER" id="PTHR12515">
    <property type="entry name" value="STERILE ALPHA MOTIF DOMAIN CONTAINING PROTEIN 4-RELATED"/>
    <property type="match status" value="1"/>
</dbReference>
<dbReference type="Pfam" id="PF00536">
    <property type="entry name" value="SAM_1"/>
    <property type="match status" value="1"/>
</dbReference>
<dbReference type="SMART" id="SM00454">
    <property type="entry name" value="SAM"/>
    <property type="match status" value="1"/>
</dbReference>
<dbReference type="SUPFAM" id="SSF47769">
    <property type="entry name" value="SAM/Pointed domain"/>
    <property type="match status" value="1"/>
</dbReference>
<name>SMAG1_XENLA</name>
<organism>
    <name type="scientific">Xenopus laevis</name>
    <name type="common">African clawed frog</name>
    <dbReference type="NCBI Taxonomy" id="8355"/>
    <lineage>
        <taxon>Eukaryota</taxon>
        <taxon>Metazoa</taxon>
        <taxon>Chordata</taxon>
        <taxon>Craniata</taxon>
        <taxon>Vertebrata</taxon>
        <taxon>Euteleostomi</taxon>
        <taxon>Amphibia</taxon>
        <taxon>Batrachia</taxon>
        <taxon>Anura</taxon>
        <taxon>Pipoidea</taxon>
        <taxon>Pipidae</taxon>
        <taxon>Xenopodinae</taxon>
        <taxon>Xenopus</taxon>
        <taxon>Xenopus</taxon>
    </lineage>
</organism>
<accession>Q5FWP2</accession>
<proteinExistence type="evidence at transcript level"/>
<gene>
    <name type="primary">samd4a</name>
    <name type="synonym">smaug1</name>
</gene>
<keyword id="KW-0966">Cell projection</keyword>
<keyword id="KW-0963">Cytoplasm</keyword>
<keyword id="KW-1185">Reference proteome</keyword>
<keyword id="KW-0678">Repressor</keyword>
<keyword id="KW-0770">Synapse</keyword>
<keyword id="KW-0771">Synaptosome</keyword>
<keyword id="KW-0810">Translation regulation</keyword>